<gene>
    <name evidence="1" type="primary">atpD</name>
    <name type="ordered locus">BT_0711</name>
</gene>
<accession>Q8A9V4</accession>
<feature type="chain" id="PRO_0000254213" description="ATP synthase subunit beta">
    <location>
        <begin position="1"/>
        <end position="505"/>
    </location>
</feature>
<feature type="binding site" evidence="1">
    <location>
        <begin position="157"/>
        <end position="164"/>
    </location>
    <ligand>
        <name>ATP</name>
        <dbReference type="ChEBI" id="CHEBI:30616"/>
    </ligand>
</feature>
<organism>
    <name type="scientific">Bacteroides thetaiotaomicron (strain ATCC 29148 / DSM 2079 / JCM 5827 / CCUG 10774 / NCTC 10582 / VPI-5482 / E50)</name>
    <dbReference type="NCBI Taxonomy" id="226186"/>
    <lineage>
        <taxon>Bacteria</taxon>
        <taxon>Pseudomonadati</taxon>
        <taxon>Bacteroidota</taxon>
        <taxon>Bacteroidia</taxon>
        <taxon>Bacteroidales</taxon>
        <taxon>Bacteroidaceae</taxon>
        <taxon>Bacteroides</taxon>
    </lineage>
</organism>
<keyword id="KW-0066">ATP synthesis</keyword>
<keyword id="KW-0067">ATP-binding</keyword>
<keyword id="KW-0997">Cell inner membrane</keyword>
<keyword id="KW-1003">Cell membrane</keyword>
<keyword id="KW-0139">CF(1)</keyword>
<keyword id="KW-0375">Hydrogen ion transport</keyword>
<keyword id="KW-0406">Ion transport</keyword>
<keyword id="KW-0472">Membrane</keyword>
<keyword id="KW-0547">Nucleotide-binding</keyword>
<keyword id="KW-1185">Reference proteome</keyword>
<keyword id="KW-1278">Translocase</keyword>
<keyword id="KW-0813">Transport</keyword>
<sequence length="505" mass="55330">MSQIIGHISQVIGPVVDVYFEGTDAELMLPSIHDALEIKRPNGKILVVEVQQHIGENTVRTVAMDSTDGLQRGMKVYPTGGPITMPIGEQIKGRLMNVVGDSIDGMKSLDRTGAYSIHRDPPKFEDLTTVQEVLFTGIKVIDLLEPYAKGGKIGLFGGAGVGKTVLIQELINNIAKKHNGFSVFAGVGERTREGNDLLREMIESGVIRYGEAFKESMEKGDWDLSKVDYNELEKSQVSLIFGQMNEPPGARASVALSGLTVAESFRDAGKEGEKRDILFFIDNIFRFTQAGSEVSALLGRMPSAVGYQPTLATEMGAMQERITSTRKGSITSVQAVYVPADDLTDPAPATTFSHLDATTVLDRKITELGIYPAVDPLASTSRILDPHIVGQEHYDVAQRVKQILQRNKELQDIISILGMEELSEEDKLVVNRARRVQRFLSQPFAVAEQFTGVPGVMVGIEDTIKGFRMILDGEVDNLPEQAFLNVGTIEEAIEKGKKLLEQAKK</sequence>
<name>ATPB_BACTN</name>
<protein>
    <recommendedName>
        <fullName evidence="1">ATP synthase subunit beta</fullName>
        <ecNumber evidence="1">7.1.2.2</ecNumber>
    </recommendedName>
    <alternativeName>
        <fullName evidence="1">ATP synthase F1 sector subunit beta</fullName>
    </alternativeName>
    <alternativeName>
        <fullName evidence="1">F-ATPase subunit beta</fullName>
    </alternativeName>
</protein>
<proteinExistence type="inferred from homology"/>
<reference key="1">
    <citation type="journal article" date="2003" name="Science">
        <title>A genomic view of the human-Bacteroides thetaiotaomicron symbiosis.</title>
        <authorList>
            <person name="Xu J."/>
            <person name="Bjursell M.K."/>
            <person name="Himrod J."/>
            <person name="Deng S."/>
            <person name="Carmichael L.K."/>
            <person name="Chiang H.C."/>
            <person name="Hooper L.V."/>
            <person name="Gordon J.I."/>
        </authorList>
    </citation>
    <scope>NUCLEOTIDE SEQUENCE [LARGE SCALE GENOMIC DNA]</scope>
    <source>
        <strain>ATCC 29148 / DSM 2079 / JCM 5827 / CCUG 10774 / NCTC 10582 / VPI-5482 / E50</strain>
    </source>
</reference>
<dbReference type="EC" id="7.1.2.2" evidence="1"/>
<dbReference type="EMBL" id="AE015928">
    <property type="protein sequence ID" value="AAO75818.1"/>
    <property type="molecule type" value="Genomic_DNA"/>
</dbReference>
<dbReference type="RefSeq" id="NP_809624.1">
    <property type="nucleotide sequence ID" value="NC_004663.1"/>
</dbReference>
<dbReference type="RefSeq" id="WP_008761388.1">
    <property type="nucleotide sequence ID" value="NZ_UYXG01000002.1"/>
</dbReference>
<dbReference type="SMR" id="Q8A9V4"/>
<dbReference type="FunCoup" id="Q8A9V4">
    <property type="interactions" value="387"/>
</dbReference>
<dbReference type="STRING" id="226186.BT_0711"/>
<dbReference type="PaxDb" id="226186-BT_0711"/>
<dbReference type="EnsemblBacteria" id="AAO75818">
    <property type="protein sequence ID" value="AAO75818"/>
    <property type="gene ID" value="BT_0711"/>
</dbReference>
<dbReference type="GeneID" id="60926680"/>
<dbReference type="KEGG" id="bth:BT_0711"/>
<dbReference type="PATRIC" id="fig|226186.12.peg.726"/>
<dbReference type="eggNOG" id="COG0055">
    <property type="taxonomic scope" value="Bacteria"/>
</dbReference>
<dbReference type="HOGENOM" id="CLU_022398_0_2_10"/>
<dbReference type="InParanoid" id="Q8A9V4"/>
<dbReference type="OrthoDB" id="9801639at2"/>
<dbReference type="Proteomes" id="UP000001414">
    <property type="component" value="Chromosome"/>
</dbReference>
<dbReference type="GO" id="GO:0005886">
    <property type="term" value="C:plasma membrane"/>
    <property type="evidence" value="ECO:0007669"/>
    <property type="project" value="UniProtKB-SubCell"/>
</dbReference>
<dbReference type="GO" id="GO:0045259">
    <property type="term" value="C:proton-transporting ATP synthase complex"/>
    <property type="evidence" value="ECO:0007669"/>
    <property type="project" value="UniProtKB-KW"/>
</dbReference>
<dbReference type="GO" id="GO:0005524">
    <property type="term" value="F:ATP binding"/>
    <property type="evidence" value="ECO:0007669"/>
    <property type="project" value="UniProtKB-UniRule"/>
</dbReference>
<dbReference type="GO" id="GO:0016887">
    <property type="term" value="F:ATP hydrolysis activity"/>
    <property type="evidence" value="ECO:0007669"/>
    <property type="project" value="InterPro"/>
</dbReference>
<dbReference type="GO" id="GO:0046933">
    <property type="term" value="F:proton-transporting ATP synthase activity, rotational mechanism"/>
    <property type="evidence" value="ECO:0007669"/>
    <property type="project" value="UniProtKB-UniRule"/>
</dbReference>
<dbReference type="CDD" id="cd18110">
    <property type="entry name" value="ATP-synt_F1_beta_C"/>
    <property type="match status" value="1"/>
</dbReference>
<dbReference type="CDD" id="cd18115">
    <property type="entry name" value="ATP-synt_F1_beta_N"/>
    <property type="match status" value="1"/>
</dbReference>
<dbReference type="CDD" id="cd01133">
    <property type="entry name" value="F1-ATPase_beta_CD"/>
    <property type="match status" value="1"/>
</dbReference>
<dbReference type="FunFam" id="1.10.1140.10:FF:000001">
    <property type="entry name" value="ATP synthase subunit beta"/>
    <property type="match status" value="1"/>
</dbReference>
<dbReference type="FunFam" id="2.40.10.170:FF:000011">
    <property type="entry name" value="ATP synthase subunit beta"/>
    <property type="match status" value="1"/>
</dbReference>
<dbReference type="FunFam" id="3.40.50.300:FF:000004">
    <property type="entry name" value="ATP synthase subunit beta"/>
    <property type="match status" value="1"/>
</dbReference>
<dbReference type="Gene3D" id="2.40.10.170">
    <property type="match status" value="1"/>
</dbReference>
<dbReference type="Gene3D" id="1.10.1140.10">
    <property type="entry name" value="Bovine Mitochondrial F1-atpase, Atp Synthase Beta Chain, Chain D, domain 3"/>
    <property type="match status" value="1"/>
</dbReference>
<dbReference type="Gene3D" id="3.40.50.300">
    <property type="entry name" value="P-loop containing nucleotide triphosphate hydrolases"/>
    <property type="match status" value="1"/>
</dbReference>
<dbReference type="HAMAP" id="MF_01347">
    <property type="entry name" value="ATP_synth_beta_bact"/>
    <property type="match status" value="1"/>
</dbReference>
<dbReference type="InterPro" id="IPR003593">
    <property type="entry name" value="AAA+_ATPase"/>
</dbReference>
<dbReference type="InterPro" id="IPR055190">
    <property type="entry name" value="ATP-synt_VA_C"/>
</dbReference>
<dbReference type="InterPro" id="IPR005722">
    <property type="entry name" value="ATP_synth_F1_bsu"/>
</dbReference>
<dbReference type="InterPro" id="IPR020003">
    <property type="entry name" value="ATPase_a/bsu_AS"/>
</dbReference>
<dbReference type="InterPro" id="IPR050053">
    <property type="entry name" value="ATPase_alpha/beta_chains"/>
</dbReference>
<dbReference type="InterPro" id="IPR004100">
    <property type="entry name" value="ATPase_F1/V1/A1_a/bsu_N"/>
</dbReference>
<dbReference type="InterPro" id="IPR036121">
    <property type="entry name" value="ATPase_F1/V1/A1_a/bsu_N_sf"/>
</dbReference>
<dbReference type="InterPro" id="IPR000194">
    <property type="entry name" value="ATPase_F1/V1/A1_a/bsu_nucl-bd"/>
</dbReference>
<dbReference type="InterPro" id="IPR024034">
    <property type="entry name" value="ATPase_F1/V1_b/a_C"/>
</dbReference>
<dbReference type="InterPro" id="IPR027417">
    <property type="entry name" value="P-loop_NTPase"/>
</dbReference>
<dbReference type="NCBIfam" id="TIGR01039">
    <property type="entry name" value="atpD"/>
    <property type="match status" value="1"/>
</dbReference>
<dbReference type="PANTHER" id="PTHR15184">
    <property type="entry name" value="ATP SYNTHASE"/>
    <property type="match status" value="1"/>
</dbReference>
<dbReference type="PANTHER" id="PTHR15184:SF71">
    <property type="entry name" value="ATP SYNTHASE SUBUNIT BETA, MITOCHONDRIAL"/>
    <property type="match status" value="1"/>
</dbReference>
<dbReference type="Pfam" id="PF00006">
    <property type="entry name" value="ATP-synt_ab"/>
    <property type="match status" value="1"/>
</dbReference>
<dbReference type="Pfam" id="PF02874">
    <property type="entry name" value="ATP-synt_ab_N"/>
    <property type="match status" value="1"/>
</dbReference>
<dbReference type="Pfam" id="PF22919">
    <property type="entry name" value="ATP-synt_VA_C"/>
    <property type="match status" value="1"/>
</dbReference>
<dbReference type="SMART" id="SM00382">
    <property type="entry name" value="AAA"/>
    <property type="match status" value="1"/>
</dbReference>
<dbReference type="SUPFAM" id="SSF47917">
    <property type="entry name" value="C-terminal domain of alpha and beta subunits of F1 ATP synthase"/>
    <property type="match status" value="1"/>
</dbReference>
<dbReference type="SUPFAM" id="SSF50615">
    <property type="entry name" value="N-terminal domain of alpha and beta subunits of F1 ATP synthase"/>
    <property type="match status" value="1"/>
</dbReference>
<dbReference type="SUPFAM" id="SSF52540">
    <property type="entry name" value="P-loop containing nucleoside triphosphate hydrolases"/>
    <property type="match status" value="1"/>
</dbReference>
<dbReference type="PROSITE" id="PS00152">
    <property type="entry name" value="ATPASE_ALPHA_BETA"/>
    <property type="match status" value="1"/>
</dbReference>
<evidence type="ECO:0000255" key="1">
    <source>
        <dbReference type="HAMAP-Rule" id="MF_01347"/>
    </source>
</evidence>
<comment type="function">
    <text evidence="1">Produces ATP from ADP in the presence of a proton gradient across the membrane. The catalytic sites are hosted primarily by the beta subunits.</text>
</comment>
<comment type="catalytic activity">
    <reaction evidence="1">
        <text>ATP + H2O + 4 H(+)(in) = ADP + phosphate + 5 H(+)(out)</text>
        <dbReference type="Rhea" id="RHEA:57720"/>
        <dbReference type="ChEBI" id="CHEBI:15377"/>
        <dbReference type="ChEBI" id="CHEBI:15378"/>
        <dbReference type="ChEBI" id="CHEBI:30616"/>
        <dbReference type="ChEBI" id="CHEBI:43474"/>
        <dbReference type="ChEBI" id="CHEBI:456216"/>
        <dbReference type="EC" id="7.1.2.2"/>
    </reaction>
</comment>
<comment type="subunit">
    <text evidence="1">F-type ATPases have 2 components, CF(1) - the catalytic core - and CF(0) - the membrane proton channel. CF(1) has five subunits: alpha(3), beta(3), gamma(1), delta(1), epsilon(1). CF(0) has three main subunits: a(1), b(2) and c(9-12). The alpha and beta chains form an alternating ring which encloses part of the gamma chain. CF(1) is attached to CF(0) by a central stalk formed by the gamma and epsilon chains, while a peripheral stalk is formed by the delta and b chains.</text>
</comment>
<comment type="subcellular location">
    <subcellularLocation>
        <location evidence="1">Cell inner membrane</location>
        <topology evidence="1">Peripheral membrane protein</topology>
    </subcellularLocation>
</comment>
<comment type="similarity">
    <text evidence="1">Belongs to the ATPase alpha/beta chains family.</text>
</comment>